<organism>
    <name type="scientific">Mycoplasma pneumoniae (strain ATCC 29342 / M129 / Subtype 1)</name>
    <name type="common">Mycoplasmoides pneumoniae</name>
    <dbReference type="NCBI Taxonomy" id="272634"/>
    <lineage>
        <taxon>Bacteria</taxon>
        <taxon>Bacillati</taxon>
        <taxon>Mycoplasmatota</taxon>
        <taxon>Mycoplasmoidales</taxon>
        <taxon>Mycoplasmoidaceae</taxon>
        <taxon>Mycoplasmoides</taxon>
    </lineage>
</organism>
<keyword id="KW-1003">Cell membrane</keyword>
<keyword id="KW-0472">Membrane</keyword>
<keyword id="KW-1185">Reference proteome</keyword>
<keyword id="KW-0812">Transmembrane</keyword>
<keyword id="KW-1133">Transmembrane helix</keyword>
<feature type="chain" id="PRO_0000210649" description="Uncharacterized protein MPN_112">
    <location>
        <begin position="1"/>
        <end position="130"/>
    </location>
</feature>
<feature type="transmembrane region" description="Helical" evidence="1">
    <location>
        <begin position="34"/>
        <end position="54"/>
    </location>
</feature>
<feature type="transmembrane region" description="Helical" evidence="1">
    <location>
        <begin position="73"/>
        <end position="93"/>
    </location>
</feature>
<feature type="transmembrane region" description="Helical" evidence="1">
    <location>
        <begin position="107"/>
        <end position="127"/>
    </location>
</feature>
<protein>
    <recommendedName>
        <fullName>Uncharacterized protein MPN_112</fullName>
    </recommendedName>
</protein>
<reference key="1">
    <citation type="journal article" date="1996" name="Nucleic Acids Res.">
        <title>Complete sequence analysis of the genome of the bacterium Mycoplasma pneumoniae.</title>
        <authorList>
            <person name="Himmelreich R."/>
            <person name="Hilbert H."/>
            <person name="Plagens H."/>
            <person name="Pirkl E."/>
            <person name="Li B.-C."/>
            <person name="Herrmann R."/>
        </authorList>
    </citation>
    <scope>NUCLEOTIDE SEQUENCE [LARGE SCALE GENOMIC DNA]</scope>
    <source>
        <strain>ATCC 29342 / M129 / Subtype 1</strain>
    </source>
</reference>
<evidence type="ECO:0000255" key="1"/>
<evidence type="ECO:0000305" key="2"/>
<dbReference type="EMBL" id="U00089">
    <property type="protein sequence ID" value="AAB95690.1"/>
    <property type="molecule type" value="Genomic_DNA"/>
</dbReference>
<dbReference type="PIR" id="S73368">
    <property type="entry name" value="S73368"/>
</dbReference>
<dbReference type="RefSeq" id="NP_109800.1">
    <property type="nucleotide sequence ID" value="NC_000912.1"/>
</dbReference>
<dbReference type="RefSeq" id="WP_010874469.1">
    <property type="nucleotide sequence ID" value="NZ_OU342337.1"/>
</dbReference>
<dbReference type="SMR" id="P75450"/>
<dbReference type="EnsemblBacteria" id="AAB95690">
    <property type="protein sequence ID" value="AAB95690"/>
    <property type="gene ID" value="MPN_112"/>
</dbReference>
<dbReference type="KEGG" id="mpn:MPN_112"/>
<dbReference type="PATRIC" id="fig|272634.6.peg.119"/>
<dbReference type="HOGENOM" id="CLU_1935730_0_0_14"/>
<dbReference type="OrthoDB" id="391626at2"/>
<dbReference type="BioCyc" id="MPNE272634:G1GJ3-191-MONOMER"/>
<dbReference type="Proteomes" id="UP000000808">
    <property type="component" value="Chromosome"/>
</dbReference>
<dbReference type="GO" id="GO:0005886">
    <property type="term" value="C:plasma membrane"/>
    <property type="evidence" value="ECO:0007669"/>
    <property type="project" value="UniProtKB-SubCell"/>
</dbReference>
<dbReference type="Gene3D" id="1.20.1250.20">
    <property type="entry name" value="MFS general substrate transporter like domains"/>
    <property type="match status" value="1"/>
</dbReference>
<dbReference type="InterPro" id="IPR036259">
    <property type="entry name" value="MFS_trans_sf"/>
</dbReference>
<dbReference type="SUPFAM" id="SSF103473">
    <property type="entry name" value="MFS general substrate transporter"/>
    <property type="match status" value="1"/>
</dbReference>
<comment type="subcellular location">
    <subcellularLocation>
        <location evidence="2">Cell membrane</location>
        <topology evidence="2">Multi-pass membrane protein</topology>
    </subcellularLocation>
</comment>
<name>Y112_MYCPN</name>
<proteinExistence type="predicted"/>
<accession>P75450</accession>
<sequence>MLDKLLQKFRDQKKPVFHKEEGYWEISALRKWAAILIIAFGAGIIYIVPYFAFFQFKTAVANVTGVEPNRISLLLTAYGIVSLLFYIPGGWLADRISAKALFSVSMFGTGIITFWYFLVGLKGIVWITPN</sequence>
<gene>
    <name type="ordered locus">MPN_112</name>
    <name type="ORF">C09_orf130b</name>
    <name type="ORF">MP042</name>
</gene>